<name>ERLN2_HUMAN</name>
<gene>
    <name type="primary">ERLIN2</name>
    <name type="synonym">C8orf2</name>
    <name type="synonym">SPFH2</name>
    <name type="ORF">UNQ2441/PRO5003/PRO9924</name>
</gene>
<reference key="1">
    <citation type="journal article" date="1999" name="Cytogenet. Cell Genet.">
        <title>Cloning and characterization of a novel gene (C8orf2), a human representative of a novel gene family with homology to C. elegans C42.C1.9.</title>
        <authorList>
            <person name="Ikegawa S."/>
            <person name="Isomura M."/>
            <person name="Koshizuka Y."/>
            <person name="Nakamura Y."/>
        </authorList>
    </citation>
    <scope>NUCLEOTIDE SEQUENCE [GENOMIC DNA]</scope>
    <scope>ALTERNATIVE SPLICING</scope>
    <scope>TISSUE SPECIFICITY</scope>
</reference>
<reference key="2">
    <citation type="journal article" date="2007" name="BMC Genomics">
        <title>The full-ORF clone resource of the German cDNA consortium.</title>
        <authorList>
            <person name="Bechtel S."/>
            <person name="Rosenfelder H."/>
            <person name="Duda A."/>
            <person name="Schmidt C.P."/>
            <person name="Ernst U."/>
            <person name="Wellenreuther R."/>
            <person name="Mehrle A."/>
            <person name="Schuster C."/>
            <person name="Bahr A."/>
            <person name="Bloecker H."/>
            <person name="Heubner D."/>
            <person name="Hoerlein A."/>
            <person name="Michel G."/>
            <person name="Wedler H."/>
            <person name="Koehrer K."/>
            <person name="Ottenwaelder B."/>
            <person name="Poustka A."/>
            <person name="Wiemann S."/>
            <person name="Schupp I."/>
        </authorList>
    </citation>
    <scope>NUCLEOTIDE SEQUENCE [LARGE SCALE MRNA] (ISOFORM 1)</scope>
    <source>
        <tissue>Lymph node</tissue>
    </source>
</reference>
<reference key="3">
    <citation type="journal article" date="2003" name="Genome Res.">
        <title>The secreted protein discovery initiative (SPDI), a large-scale effort to identify novel human secreted and transmembrane proteins: a bioinformatics assessment.</title>
        <authorList>
            <person name="Clark H.F."/>
            <person name="Gurney A.L."/>
            <person name="Abaya E."/>
            <person name="Baker K."/>
            <person name="Baldwin D.T."/>
            <person name="Brush J."/>
            <person name="Chen J."/>
            <person name="Chow B."/>
            <person name="Chui C."/>
            <person name="Crowley C."/>
            <person name="Currell B."/>
            <person name="Deuel B."/>
            <person name="Dowd P."/>
            <person name="Eaton D."/>
            <person name="Foster J.S."/>
            <person name="Grimaldi C."/>
            <person name="Gu Q."/>
            <person name="Hass P.E."/>
            <person name="Heldens S."/>
            <person name="Huang A."/>
            <person name="Kim H.S."/>
            <person name="Klimowski L."/>
            <person name="Jin Y."/>
            <person name="Johnson S."/>
            <person name="Lee J."/>
            <person name="Lewis L."/>
            <person name="Liao D."/>
            <person name="Mark M.R."/>
            <person name="Robbie E."/>
            <person name="Sanchez C."/>
            <person name="Schoenfeld J."/>
            <person name="Seshagiri S."/>
            <person name="Simmons L."/>
            <person name="Singh J."/>
            <person name="Smith V."/>
            <person name="Stinson J."/>
            <person name="Vagts A."/>
            <person name="Vandlen R.L."/>
            <person name="Watanabe C."/>
            <person name="Wieand D."/>
            <person name="Woods K."/>
            <person name="Xie M.-H."/>
            <person name="Yansura D.G."/>
            <person name="Yi S."/>
            <person name="Yu G."/>
            <person name="Yuan J."/>
            <person name="Zhang M."/>
            <person name="Zhang Z."/>
            <person name="Goddard A.D."/>
            <person name="Wood W.I."/>
            <person name="Godowski P.J."/>
            <person name="Gray A.M."/>
        </authorList>
    </citation>
    <scope>NUCLEOTIDE SEQUENCE [LARGE SCALE MRNA] (ISOFORMS 1 AND 2)</scope>
</reference>
<reference key="4">
    <citation type="journal article" date="2004" name="Nat. Genet.">
        <title>Complete sequencing and characterization of 21,243 full-length human cDNAs.</title>
        <authorList>
            <person name="Ota T."/>
            <person name="Suzuki Y."/>
            <person name="Nishikawa T."/>
            <person name="Otsuki T."/>
            <person name="Sugiyama T."/>
            <person name="Irie R."/>
            <person name="Wakamatsu A."/>
            <person name="Hayashi K."/>
            <person name="Sato H."/>
            <person name="Nagai K."/>
            <person name="Kimura K."/>
            <person name="Makita H."/>
            <person name="Sekine M."/>
            <person name="Obayashi M."/>
            <person name="Nishi T."/>
            <person name="Shibahara T."/>
            <person name="Tanaka T."/>
            <person name="Ishii S."/>
            <person name="Yamamoto J."/>
            <person name="Saito K."/>
            <person name="Kawai Y."/>
            <person name="Isono Y."/>
            <person name="Nakamura Y."/>
            <person name="Nagahari K."/>
            <person name="Murakami K."/>
            <person name="Yasuda T."/>
            <person name="Iwayanagi T."/>
            <person name="Wagatsuma M."/>
            <person name="Shiratori A."/>
            <person name="Sudo H."/>
            <person name="Hosoiri T."/>
            <person name="Kaku Y."/>
            <person name="Kodaira H."/>
            <person name="Kondo H."/>
            <person name="Sugawara M."/>
            <person name="Takahashi M."/>
            <person name="Kanda K."/>
            <person name="Yokoi T."/>
            <person name="Furuya T."/>
            <person name="Kikkawa E."/>
            <person name="Omura Y."/>
            <person name="Abe K."/>
            <person name="Kamihara K."/>
            <person name="Katsuta N."/>
            <person name="Sato K."/>
            <person name="Tanikawa M."/>
            <person name="Yamazaki M."/>
            <person name="Ninomiya K."/>
            <person name="Ishibashi T."/>
            <person name="Yamashita H."/>
            <person name="Murakawa K."/>
            <person name="Fujimori K."/>
            <person name="Tanai H."/>
            <person name="Kimata M."/>
            <person name="Watanabe M."/>
            <person name="Hiraoka S."/>
            <person name="Chiba Y."/>
            <person name="Ishida S."/>
            <person name="Ono Y."/>
            <person name="Takiguchi S."/>
            <person name="Watanabe S."/>
            <person name="Yosida M."/>
            <person name="Hotuta T."/>
            <person name="Kusano J."/>
            <person name="Kanehori K."/>
            <person name="Takahashi-Fujii A."/>
            <person name="Hara H."/>
            <person name="Tanase T.-O."/>
            <person name="Nomura Y."/>
            <person name="Togiya S."/>
            <person name="Komai F."/>
            <person name="Hara R."/>
            <person name="Takeuchi K."/>
            <person name="Arita M."/>
            <person name="Imose N."/>
            <person name="Musashino K."/>
            <person name="Yuuki H."/>
            <person name="Oshima A."/>
            <person name="Sasaki N."/>
            <person name="Aotsuka S."/>
            <person name="Yoshikawa Y."/>
            <person name="Matsunawa H."/>
            <person name="Ichihara T."/>
            <person name="Shiohata N."/>
            <person name="Sano S."/>
            <person name="Moriya S."/>
            <person name="Momiyama H."/>
            <person name="Satoh N."/>
            <person name="Takami S."/>
            <person name="Terashima Y."/>
            <person name="Suzuki O."/>
            <person name="Nakagawa S."/>
            <person name="Senoh A."/>
            <person name="Mizoguchi H."/>
            <person name="Goto Y."/>
            <person name="Shimizu F."/>
            <person name="Wakebe H."/>
            <person name="Hishigaki H."/>
            <person name="Watanabe T."/>
            <person name="Sugiyama A."/>
            <person name="Takemoto M."/>
            <person name="Kawakami B."/>
            <person name="Yamazaki M."/>
            <person name="Watanabe K."/>
            <person name="Kumagai A."/>
            <person name="Itakura S."/>
            <person name="Fukuzumi Y."/>
            <person name="Fujimori Y."/>
            <person name="Komiyama M."/>
            <person name="Tashiro H."/>
            <person name="Tanigami A."/>
            <person name="Fujiwara T."/>
            <person name="Ono T."/>
            <person name="Yamada K."/>
            <person name="Fujii Y."/>
            <person name="Ozaki K."/>
            <person name="Hirao M."/>
            <person name="Ohmori Y."/>
            <person name="Kawabata A."/>
            <person name="Hikiji T."/>
            <person name="Kobatake N."/>
            <person name="Inagaki H."/>
            <person name="Ikema Y."/>
            <person name="Okamoto S."/>
            <person name="Okitani R."/>
            <person name="Kawakami T."/>
            <person name="Noguchi S."/>
            <person name="Itoh T."/>
            <person name="Shigeta K."/>
            <person name="Senba T."/>
            <person name="Matsumura K."/>
            <person name="Nakajima Y."/>
            <person name="Mizuno T."/>
            <person name="Morinaga M."/>
            <person name="Sasaki M."/>
            <person name="Togashi T."/>
            <person name="Oyama M."/>
            <person name="Hata H."/>
            <person name="Watanabe M."/>
            <person name="Komatsu T."/>
            <person name="Mizushima-Sugano J."/>
            <person name="Satoh T."/>
            <person name="Shirai Y."/>
            <person name="Takahashi Y."/>
            <person name="Nakagawa K."/>
            <person name="Okumura K."/>
            <person name="Nagase T."/>
            <person name="Nomura N."/>
            <person name="Kikuchi H."/>
            <person name="Masuho Y."/>
            <person name="Yamashita R."/>
            <person name="Nakai K."/>
            <person name="Yada T."/>
            <person name="Nakamura Y."/>
            <person name="Ohara O."/>
            <person name="Isogai T."/>
            <person name="Sugano S."/>
        </authorList>
    </citation>
    <scope>NUCLEOTIDE SEQUENCE [LARGE SCALE MRNA] (ISOFORMS 1 AND 3)</scope>
    <source>
        <tissue>Brain</tissue>
        <tissue>Fetal brain</tissue>
    </source>
</reference>
<reference key="5">
    <citation type="submission" date="2005-09" db="EMBL/GenBank/DDBJ databases">
        <authorList>
            <person name="Mural R.J."/>
            <person name="Istrail S."/>
            <person name="Sutton G.G."/>
            <person name="Florea L."/>
            <person name="Halpern A.L."/>
            <person name="Mobarry C.M."/>
            <person name="Lippert R."/>
            <person name="Walenz B."/>
            <person name="Shatkay H."/>
            <person name="Dew I."/>
            <person name="Miller J.R."/>
            <person name="Flanigan M.J."/>
            <person name="Edwards N.J."/>
            <person name="Bolanos R."/>
            <person name="Fasulo D."/>
            <person name="Halldorsson B.V."/>
            <person name="Hannenhalli S."/>
            <person name="Turner R."/>
            <person name="Yooseph S."/>
            <person name="Lu F."/>
            <person name="Nusskern D.R."/>
            <person name="Shue B.C."/>
            <person name="Zheng X.H."/>
            <person name="Zhong F."/>
            <person name="Delcher A.L."/>
            <person name="Huson D.H."/>
            <person name="Kravitz S.A."/>
            <person name="Mouchard L."/>
            <person name="Reinert K."/>
            <person name="Remington K.A."/>
            <person name="Clark A.G."/>
            <person name="Waterman M.S."/>
            <person name="Eichler E.E."/>
            <person name="Adams M.D."/>
            <person name="Hunkapiller M.W."/>
            <person name="Myers E.W."/>
            <person name="Venter J.C."/>
        </authorList>
    </citation>
    <scope>NUCLEOTIDE SEQUENCE [LARGE SCALE GENOMIC DNA]</scope>
</reference>
<reference key="6">
    <citation type="journal article" date="2004" name="Genome Res.">
        <title>The status, quality, and expansion of the NIH full-length cDNA project: the Mammalian Gene Collection (MGC).</title>
        <authorList>
            <consortium name="The MGC Project Team"/>
        </authorList>
    </citation>
    <scope>NUCLEOTIDE SEQUENCE [LARGE SCALE MRNA] (ISOFORMS 2 AND 3)</scope>
    <scope>NUCLEOTIDE SEQUENCE [LARGE SCALE MRNA] OF 1-338 (ISOFORM 1)</scope>
    <source>
        <tissue>Duodenum</tissue>
        <tissue>Prostate</tissue>
        <tissue>Testis</tissue>
    </source>
</reference>
<reference key="7">
    <citation type="journal article" date="2009" name="J. Biol. Chem.">
        <title>An endoplasmic reticulum (ER) membrane complex composed of SPFH1 and SPFH2 mediates the ER-associated degradation of inositol 1,4,5-trisphosphate receptors.</title>
        <authorList>
            <person name="Pearce M.M.P."/>
            <person name="Wormer D.B."/>
            <person name="Wilkens S."/>
            <person name="Wojcikiewicz R.J.H."/>
        </authorList>
    </citation>
    <scope>PROTEIN SEQUENCE</scope>
    <scope>FUNCTION</scope>
    <scope>SUBUNIT</scope>
    <scope>SUBCELLULAR LOCATION</scope>
    <scope>GLYCOSYLATION</scope>
    <scope>INTERACTION WITH ERLIN1</scope>
</reference>
<reference key="8">
    <citation type="journal article" date="2006" name="J. Cell Sci.">
        <title>Erlin-1 and erlin-2 are novel members of the prohibitin family of proteins that define lipid-raft-like domains of the ER.</title>
        <authorList>
            <person name="Browman D.T."/>
            <person name="Resek M.E."/>
            <person name="Zajchowski L.D."/>
            <person name="Robbins S.M."/>
        </authorList>
    </citation>
    <scope>SUBCELLULAR LOCATION</scope>
</reference>
<reference key="9">
    <citation type="journal article" date="2007" name="J. Biol. Chem.">
        <title>SPFH2 mediates the endoplasmic reticulum-associated degradation of inositol 1,4,5-trisphosphate receptors and other substrates in mammalian cells.</title>
        <authorList>
            <person name="Pearce M.M."/>
            <person name="Wang Y."/>
            <person name="Kelley G.G."/>
            <person name="Wojcikiewicz R.J.H."/>
        </authorList>
    </citation>
    <scope>FUNCTION</scope>
    <scope>SUBCELLULAR LOCATION</scope>
    <scope>GLYCOSYLATION AT ASN-106</scope>
    <scope>MUTAGENESIS OF ASN-106</scope>
</reference>
<reference key="10">
    <citation type="journal article" date="2011" name="BMC Syst. Biol.">
        <title>Initial characterization of the human central proteome.</title>
        <authorList>
            <person name="Burkard T.R."/>
            <person name="Planyavsky M."/>
            <person name="Kaupe I."/>
            <person name="Breitwieser F.P."/>
            <person name="Buerckstuemmer T."/>
            <person name="Bennett K.L."/>
            <person name="Superti-Furga G."/>
            <person name="Colinge J."/>
        </authorList>
    </citation>
    <scope>IDENTIFICATION BY MASS SPECTROMETRY [LARGE SCALE ANALYSIS]</scope>
</reference>
<reference key="11">
    <citation type="journal article" date="2011" name="Hum. Mol. Genet.">
        <title>A frameshift mutation of ERLIN2 in recessive intellectual disability, motor dysfunction and multiple joint contractures.</title>
        <authorList>
            <person name="Yildirim Y."/>
            <person name="Orhan E.K."/>
            <person name="Iseri S.A."/>
            <person name="Serdaroglu-Oflazer P."/>
            <person name="Kara B."/>
            <person name="Solakoglu S."/>
            <person name="Tolun A."/>
        </authorList>
    </citation>
    <scope>INVOLVEMENT IN SPG18B</scope>
</reference>
<reference key="12">
    <citation type="journal article" date="2011" name="J. Biol. Chem.">
        <title>Membrane-associated ubiquitin ligase complex containing gp78 mediates sterol-accelerated degradation of 3-hydroxy-3-methylglutaryl-coenzyme A reductase.</title>
        <authorList>
            <person name="Jo Y."/>
            <person name="Sguigna P.V."/>
            <person name="DeBose-Boyd R.A."/>
        </authorList>
    </citation>
    <scope>FUNCTION</scope>
    <scope>INTERACTION WITH AMFR; SYVN1; RNF139 AND TMUB1</scope>
    <scope>SUBUNIT</scope>
</reference>
<reference key="13">
    <citation type="journal article" date="2011" name="J. Biol. Chem.">
        <title>RNF170 protein, an endoplasmic reticulum membrane ubiquitin ligase, mediates inositol 1,4,5-trisphosphate receptor ubiquitination and degradation.</title>
        <authorList>
            <person name="Lu J.P."/>
            <person name="Wang Y."/>
            <person name="Sliter D.A."/>
            <person name="Pearce M.M."/>
            <person name="Wojcikiewicz R.J."/>
        </authorList>
    </citation>
    <scope>INTERACTION WITH RNF170</scope>
</reference>
<reference key="14">
    <citation type="journal article" date="2013" name="J. Cell Biol.">
        <title>Erlins restrict SREBP activation in the ER and regulate cellular cholesterol homeostasis.</title>
        <authorList>
            <person name="Huber M.D."/>
            <person name="Vesely P.W."/>
            <person name="Datta K."/>
            <person name="Gerace L."/>
        </authorList>
    </citation>
    <scope>FUNCTION</scope>
    <scope>INTERACTION WITH SCAP; INSIG1; SREBF1 AND SREBF2</scope>
</reference>
<reference key="15">
    <citation type="journal article" date="2014" name="J. Proteomics">
        <title>An enzyme assisted RP-RPLC approach for in-depth analysis of human liver phosphoproteome.</title>
        <authorList>
            <person name="Bian Y."/>
            <person name="Song C."/>
            <person name="Cheng K."/>
            <person name="Dong M."/>
            <person name="Wang F."/>
            <person name="Huang J."/>
            <person name="Sun D."/>
            <person name="Wang L."/>
            <person name="Ye M."/>
            <person name="Zou H."/>
        </authorList>
    </citation>
    <scope>IDENTIFICATION BY MASS SPECTROMETRY [LARGE SCALE ANALYSIS]</scope>
    <source>
        <tissue>Liver</tissue>
    </source>
</reference>
<reference key="16">
    <citation type="journal article" date="2015" name="Proteomics">
        <title>N-terminome analysis of the human mitochondrial proteome.</title>
        <authorList>
            <person name="Vaca Jacome A.S."/>
            <person name="Rabilloud T."/>
            <person name="Schaeffer-Reiss C."/>
            <person name="Rompais M."/>
            <person name="Ayoub D."/>
            <person name="Lane L."/>
            <person name="Bairoch A."/>
            <person name="Van Dorsselaer A."/>
            <person name="Carapito C."/>
        </authorList>
    </citation>
    <scope>IDENTIFICATION BY MASS SPECTROMETRY [LARGE SCALE ANALYSIS]</scope>
</reference>
<reference key="17">
    <citation type="journal article" date="2018" name="Biochem. Biophys. Res. Commun.">
        <title>Stasimon/Tmem41b localizes to mitochondria-associated ER membranes and is essential for mouse embryonic development.</title>
        <authorList>
            <person name="Van Alstyne M."/>
            <person name="Lotti F."/>
            <person name="Dal Mas A."/>
            <person name="Area-Gomez E."/>
            <person name="Pellizzoni L."/>
        </authorList>
    </citation>
    <scope>INTERACTION WITH TMEM41B</scope>
</reference>
<reference key="18">
    <citation type="journal article" date="2016" name="Chin. Med. J.">
        <title>Novel Mutations in Endoplasmic Reticulum Lipid Raft-associated Protein 2 Gene Cause Pure Hereditary Spastic Paraplegia Type 18.</title>
        <authorList>
            <person name="Tian W.T."/>
            <person name="Shen J.Y."/>
            <person name="Liu X.L."/>
            <person name="Wang T."/>
            <person name="Luan X.H."/>
            <person name="Zhou H.Y."/>
            <person name="Chen S.D."/>
            <person name="Huang X.J."/>
            <person name="Cao L."/>
        </authorList>
    </citation>
    <scope>VARIANT SPG18B CYS-180</scope>
</reference>
<reference key="19">
    <citation type="journal article" date="2017" name="Eur. J. Hum. Genet.">
        <title>Massive sequencing of 70 genes reveals a myriad of missing genes or mechanisms to be uncovered in hereditary spastic paraplegias.</title>
        <authorList>
            <person name="Morais S."/>
            <person name="Raymond L."/>
            <person name="Mairey M."/>
            <person name="Coutinho P."/>
            <person name="Brandao E."/>
            <person name="Ribeiro P."/>
            <person name="Loureiro J.L."/>
            <person name="Sequeiros J."/>
            <person name="Brice A."/>
            <person name="Alonso I."/>
            <person name="Stevanin G."/>
        </authorList>
    </citation>
    <scope>VARIANT SPG18B VAL-300</scope>
</reference>
<reference key="20">
    <citation type="journal article" date="2018" name="Eur. J. Neurol.">
        <title>A novel heterozygous variant in ERLIN2 causes autosomal dominant pure hereditary spastic paraplegia.</title>
        <authorList>
            <person name="Rydning S.L."/>
            <person name="Dudesek A."/>
            <person name="Rimmele F."/>
            <person name="Funke C."/>
            <person name="Krueger S."/>
            <person name="Biskup S."/>
            <person name="Vigeland M.D."/>
            <person name="Hjorthaug H.S."/>
            <person name="Sejersted Y."/>
            <person name="Tallaksen C."/>
            <person name="Selmer K.K."/>
            <person name="Kamm C."/>
        </authorList>
    </citation>
    <scope>VARIANT SPG18A THR-129</scope>
    <scope>INVOLVEMENT IN SPG18A</scope>
</reference>
<reference key="21">
    <citation type="journal article" date="2020" name="Sci. Rep.">
        <title>An autosomal dominant ERLIN2 mutation leads to a pure HSP phenotype distinct from the autosomal recessive ERLIN2 mutations (SPG18).</title>
        <authorList>
            <person name="Park J.M."/>
            <person name="Lee B."/>
            <person name="Kim J.H."/>
            <person name="Park S.Y."/>
            <person name="Yu J."/>
            <person name="Kim U.K."/>
            <person name="Park J.S."/>
        </authorList>
    </citation>
    <scope>VARIANT SPG18A VAL-151</scope>
</reference>
<organism>
    <name type="scientific">Homo sapiens</name>
    <name type="common">Human</name>
    <dbReference type="NCBI Taxonomy" id="9606"/>
    <lineage>
        <taxon>Eukaryota</taxon>
        <taxon>Metazoa</taxon>
        <taxon>Chordata</taxon>
        <taxon>Craniata</taxon>
        <taxon>Vertebrata</taxon>
        <taxon>Euteleostomi</taxon>
        <taxon>Mammalia</taxon>
        <taxon>Eutheria</taxon>
        <taxon>Euarchontoglires</taxon>
        <taxon>Primates</taxon>
        <taxon>Haplorrhini</taxon>
        <taxon>Catarrhini</taxon>
        <taxon>Hominidae</taxon>
        <taxon>Homo</taxon>
    </lineage>
</organism>
<evidence type="ECO:0000250" key="1">
    <source>
        <dbReference type="UniProtKB" id="O75477"/>
    </source>
</evidence>
<evidence type="ECO:0000250" key="2">
    <source>
        <dbReference type="UniProtKB" id="Q8BFZ9"/>
    </source>
</evidence>
<evidence type="ECO:0000255" key="3"/>
<evidence type="ECO:0000269" key="4">
    <source>
    </source>
</evidence>
<evidence type="ECO:0000269" key="5">
    <source>
    </source>
</evidence>
<evidence type="ECO:0000269" key="6">
    <source>
    </source>
</evidence>
<evidence type="ECO:0000269" key="7">
    <source>
    </source>
</evidence>
<evidence type="ECO:0000269" key="8">
    <source>
    </source>
</evidence>
<evidence type="ECO:0000269" key="9">
    <source>
    </source>
</evidence>
<evidence type="ECO:0000269" key="10">
    <source>
    </source>
</evidence>
<evidence type="ECO:0000269" key="11">
    <source>
    </source>
</evidence>
<evidence type="ECO:0000269" key="12">
    <source>
    </source>
</evidence>
<evidence type="ECO:0000269" key="13">
    <source>
    </source>
</evidence>
<evidence type="ECO:0000269" key="14">
    <source>
    </source>
</evidence>
<evidence type="ECO:0000269" key="15">
    <source>
    </source>
</evidence>
<evidence type="ECO:0000269" key="16">
    <source>
    </source>
</evidence>
<evidence type="ECO:0000303" key="17">
    <source>
    </source>
</evidence>
<evidence type="ECO:0000303" key="18">
    <source>
    </source>
</evidence>
<evidence type="ECO:0000303" key="19">
    <source>
    </source>
</evidence>
<evidence type="ECO:0000305" key="20"/>
<evidence type="ECO:0000305" key="21">
    <source>
    </source>
</evidence>
<keyword id="KW-0007">Acetylation</keyword>
<keyword id="KW-0025">Alternative splicing</keyword>
<keyword id="KW-0153">Cholesterol metabolism</keyword>
<keyword id="KW-0903">Direct protein sequencing</keyword>
<keyword id="KW-0225">Disease variant</keyword>
<keyword id="KW-0256">Endoplasmic reticulum</keyword>
<keyword id="KW-0325">Glycoprotein</keyword>
<keyword id="KW-0890">Hereditary spastic paraplegia</keyword>
<keyword id="KW-0443">Lipid metabolism</keyword>
<keyword id="KW-0472">Membrane</keyword>
<keyword id="KW-0523">Neurodegeneration</keyword>
<keyword id="KW-1267">Proteomics identification</keyword>
<keyword id="KW-1185">Reference proteome</keyword>
<keyword id="KW-0735">Signal-anchor</keyword>
<keyword id="KW-0753">Steroid metabolism</keyword>
<keyword id="KW-1207">Sterol metabolism</keyword>
<keyword id="KW-0812">Transmembrane</keyword>
<keyword id="KW-1133">Transmembrane helix</keyword>
<accession>O94905</accession>
<accession>A0JLQ1</accession>
<accession>A8K5S9</accession>
<accession>B4DM38</accession>
<accession>D3DSW0</accession>
<accession>Q6NW21</accession>
<accession>Q86VS6</accession>
<accession>Q86W49</accession>
<proteinExistence type="evidence at protein level"/>
<dbReference type="EMBL" id="AB018790">
    <property type="protein sequence ID" value="BAA36845.1"/>
    <property type="molecule type" value="Genomic_DNA"/>
</dbReference>
<dbReference type="EMBL" id="AL442077">
    <property type="protein sequence ID" value="CAC09443.1"/>
    <property type="molecule type" value="mRNA"/>
</dbReference>
<dbReference type="EMBL" id="AY358108">
    <property type="protein sequence ID" value="AAQ88475.1"/>
    <property type="molecule type" value="mRNA"/>
</dbReference>
<dbReference type="EMBL" id="AY358851">
    <property type="protein sequence ID" value="AAQ89210.1"/>
    <property type="molecule type" value="mRNA"/>
</dbReference>
<dbReference type="EMBL" id="AK291394">
    <property type="protein sequence ID" value="BAF84083.1"/>
    <property type="molecule type" value="mRNA"/>
</dbReference>
<dbReference type="EMBL" id="AK297279">
    <property type="protein sequence ID" value="BAG59750.1"/>
    <property type="molecule type" value="mRNA"/>
</dbReference>
<dbReference type="EMBL" id="CH471080">
    <property type="protein sequence ID" value="EAW63365.1"/>
    <property type="molecule type" value="Genomic_DNA"/>
</dbReference>
<dbReference type="EMBL" id="CH471080">
    <property type="protein sequence ID" value="EAW63366.1"/>
    <property type="molecule type" value="Genomic_DNA"/>
</dbReference>
<dbReference type="EMBL" id="BC005950">
    <property type="protein sequence ID" value="AAH05950.1"/>
    <property type="status" value="ALT_TERM"/>
    <property type="molecule type" value="mRNA"/>
</dbReference>
<dbReference type="EMBL" id="BC048308">
    <property type="protein sequence ID" value="AAH48308.1"/>
    <property type="molecule type" value="mRNA"/>
</dbReference>
<dbReference type="EMBL" id="BC050611">
    <property type="protein sequence ID" value="AAH50611.1"/>
    <property type="status" value="ALT_INIT"/>
    <property type="molecule type" value="mRNA"/>
</dbReference>
<dbReference type="EMBL" id="BC067765">
    <property type="protein sequence ID" value="AAH67765.1"/>
    <property type="molecule type" value="mRNA"/>
</dbReference>
<dbReference type="CCDS" id="CCDS34879.1">
    <molecule id="O94905-2"/>
</dbReference>
<dbReference type="CCDS" id="CCDS6095.1">
    <molecule id="O94905-1"/>
</dbReference>
<dbReference type="RefSeq" id="NP_001003790.1">
    <molecule id="O94905-2"/>
    <property type="nucleotide sequence ID" value="NM_001003790.4"/>
</dbReference>
<dbReference type="RefSeq" id="NP_001003791.1">
    <molecule id="O94905-2"/>
    <property type="nucleotide sequence ID" value="NM_001003791.3"/>
</dbReference>
<dbReference type="RefSeq" id="NP_001349807.1">
    <molecule id="O94905-1"/>
    <property type="nucleotide sequence ID" value="NM_001362878.2"/>
</dbReference>
<dbReference type="RefSeq" id="NP_001349809.1">
    <molecule id="O94905-2"/>
    <property type="nucleotide sequence ID" value="NM_001362880.2"/>
</dbReference>
<dbReference type="RefSeq" id="NP_009106.1">
    <molecule id="O94905-1"/>
    <property type="nucleotide sequence ID" value="NM_007175.8"/>
</dbReference>
<dbReference type="RefSeq" id="XP_005273449.1">
    <property type="nucleotide sequence ID" value="XM_005273392.2"/>
</dbReference>
<dbReference type="RefSeq" id="XP_016868489.1">
    <property type="nucleotide sequence ID" value="XM_017013000.1"/>
</dbReference>
<dbReference type="RefSeq" id="XP_047277263.1">
    <molecule id="O94905-1"/>
    <property type="nucleotide sequence ID" value="XM_047421307.1"/>
</dbReference>
<dbReference type="RefSeq" id="XP_054215652.1">
    <molecule id="O94905-1"/>
    <property type="nucleotide sequence ID" value="XM_054359677.1"/>
</dbReference>
<dbReference type="SMR" id="O94905"/>
<dbReference type="BioGRID" id="116331">
    <property type="interactions" value="321"/>
</dbReference>
<dbReference type="ComplexPortal" id="CPX-7121">
    <property type="entry name" value="ERLIN1-ERLIN2 complex"/>
</dbReference>
<dbReference type="CORUM" id="O94905"/>
<dbReference type="FunCoup" id="O94905">
    <property type="interactions" value="2401"/>
</dbReference>
<dbReference type="IntAct" id="O94905">
    <property type="interactions" value="138"/>
</dbReference>
<dbReference type="MINT" id="O94905"/>
<dbReference type="STRING" id="9606.ENSP00000428112"/>
<dbReference type="ChEMBL" id="CHEMBL4739672"/>
<dbReference type="TCDB" id="1.P.1.1.1">
    <property type="family name" value="the polyoma virus sv40 er penetration channel (vpec) family"/>
</dbReference>
<dbReference type="TCDB" id="8.A.195.1.1">
    <property type="family name" value="the erlin1/2 complex (erlin) family"/>
</dbReference>
<dbReference type="GlyConnect" id="1222">
    <property type="glycosylation" value="10 N-Linked glycans (1 site)"/>
</dbReference>
<dbReference type="GlyCosmos" id="O94905">
    <property type="glycosylation" value="1 site, 10 glycans"/>
</dbReference>
<dbReference type="GlyGen" id="O94905">
    <property type="glycosylation" value="5 sites, 11 N-linked glycans (1 site), 2 O-linked glycans (4 sites)"/>
</dbReference>
<dbReference type="iPTMnet" id="O94905"/>
<dbReference type="PhosphoSitePlus" id="O94905"/>
<dbReference type="SwissPalm" id="O94905"/>
<dbReference type="BioMuta" id="ERLIN2"/>
<dbReference type="CPTAC" id="CPTAC-361"/>
<dbReference type="CPTAC" id="CPTAC-362"/>
<dbReference type="jPOST" id="O94905"/>
<dbReference type="MassIVE" id="O94905"/>
<dbReference type="PaxDb" id="9606-ENSP00000276461"/>
<dbReference type="PeptideAtlas" id="O94905"/>
<dbReference type="PRIDE" id="O94905"/>
<dbReference type="ProteomicsDB" id="50538">
    <molecule id="O94905-1"/>
</dbReference>
<dbReference type="ProteomicsDB" id="50539">
    <molecule id="O94905-2"/>
</dbReference>
<dbReference type="ProteomicsDB" id="50540">
    <molecule id="O94905-3"/>
</dbReference>
<dbReference type="Pumba" id="O94905"/>
<dbReference type="Antibodypedia" id="719">
    <property type="antibodies" value="259 antibodies from 32 providers"/>
</dbReference>
<dbReference type="DNASU" id="11160"/>
<dbReference type="Ensembl" id="ENST00000335171.10">
    <molecule id="O94905-2"/>
    <property type="protein sequence ID" value="ENSP00000335220.6"/>
    <property type="gene ID" value="ENSG00000147475.17"/>
</dbReference>
<dbReference type="Ensembl" id="ENST00000518586.5">
    <molecule id="O94905-3"/>
    <property type="protein sequence ID" value="ENSP00000427847.1"/>
    <property type="gene ID" value="ENSG00000147475.17"/>
</dbReference>
<dbReference type="Ensembl" id="ENST00000519638.3">
    <molecule id="O94905-1"/>
    <property type="protein sequence ID" value="ENSP00000428112.1"/>
    <property type="gene ID" value="ENSG00000147475.17"/>
</dbReference>
<dbReference type="Ensembl" id="ENST00000523107.5">
    <molecule id="O94905-3"/>
    <property type="protein sequence ID" value="ENSP00000473292.1"/>
    <property type="gene ID" value="ENSG00000147475.17"/>
</dbReference>
<dbReference type="Ensembl" id="ENST00000523887.5">
    <molecule id="O94905-3"/>
    <property type="protein sequence ID" value="ENSP00000429903.1"/>
    <property type="gene ID" value="ENSG00000147475.17"/>
</dbReference>
<dbReference type="Ensembl" id="ENST00000648919.1">
    <molecule id="O94905-2"/>
    <property type="protein sequence ID" value="ENSP00000497100.1"/>
    <property type="gene ID" value="ENSG00000147475.17"/>
</dbReference>
<dbReference type="GeneID" id="11160"/>
<dbReference type="KEGG" id="hsa:11160"/>
<dbReference type="MANE-Select" id="ENST00000519638.3">
    <property type="protein sequence ID" value="ENSP00000428112.1"/>
    <property type="RefSeq nucleotide sequence ID" value="NM_007175.8"/>
    <property type="RefSeq protein sequence ID" value="NP_009106.1"/>
</dbReference>
<dbReference type="UCSC" id="uc003xkc.5">
    <molecule id="O94905-1"/>
    <property type="organism name" value="human"/>
</dbReference>
<dbReference type="AGR" id="HGNC:1356"/>
<dbReference type="CTD" id="11160"/>
<dbReference type="DisGeNET" id="11160"/>
<dbReference type="GeneCards" id="ERLIN2"/>
<dbReference type="HGNC" id="HGNC:1356">
    <property type="gene designation" value="ERLIN2"/>
</dbReference>
<dbReference type="HPA" id="ENSG00000147475">
    <property type="expression patterns" value="Low tissue specificity"/>
</dbReference>
<dbReference type="MalaCards" id="ERLIN2"/>
<dbReference type="MIM" id="611225">
    <property type="type" value="phenotype"/>
</dbReference>
<dbReference type="MIM" id="611605">
    <property type="type" value="gene"/>
</dbReference>
<dbReference type="MIM" id="620512">
    <property type="type" value="phenotype"/>
</dbReference>
<dbReference type="neXtProt" id="NX_O94905"/>
<dbReference type="OpenTargets" id="ENSG00000147475"/>
<dbReference type="Orphanet" id="209951">
    <property type="disease" value="Autosomal spastic paraplegia type 18"/>
</dbReference>
<dbReference type="Orphanet" id="247604">
    <property type="disease" value="Juvenile primary lateral sclerosis"/>
</dbReference>
<dbReference type="Orphanet" id="280384">
    <property type="disease" value="Recessive intellectual disability-motor dysfunction-multiple joint contractures syndrome"/>
</dbReference>
<dbReference type="PharmGKB" id="PA25961"/>
<dbReference type="VEuPathDB" id="HostDB:ENSG00000147475"/>
<dbReference type="eggNOG" id="KOG2962">
    <property type="taxonomic scope" value="Eukaryota"/>
</dbReference>
<dbReference type="GeneTree" id="ENSGT00390000014666"/>
<dbReference type="HOGENOM" id="CLU_1643079_0_0_1"/>
<dbReference type="InParanoid" id="O94905"/>
<dbReference type="OMA" id="YNMVRNF"/>
<dbReference type="OrthoDB" id="77368at2759"/>
<dbReference type="PAN-GO" id="O94905">
    <property type="GO annotations" value="3 GO annotations based on evolutionary models"/>
</dbReference>
<dbReference type="PhylomeDB" id="O94905"/>
<dbReference type="TreeFam" id="TF313059"/>
<dbReference type="PathwayCommons" id="O94905"/>
<dbReference type="Reactome" id="R-HSA-382556">
    <property type="pathway name" value="ABC-family proteins mediated transport"/>
</dbReference>
<dbReference type="Reactome" id="R-HSA-5655302">
    <property type="pathway name" value="Signaling by FGFR1 in disease"/>
</dbReference>
<dbReference type="Reactome" id="R-HSA-5678895">
    <property type="pathway name" value="Defective CFTR causes cystic fibrosis"/>
</dbReference>
<dbReference type="Reactome" id="R-HSA-8853336">
    <property type="pathway name" value="Signaling by plasma membrane FGFR1 fusions"/>
</dbReference>
<dbReference type="SignaLink" id="O94905"/>
<dbReference type="SIGNOR" id="O94905"/>
<dbReference type="BioGRID-ORCS" id="11160">
    <property type="hits" value="14 hits in 1156 CRISPR screens"/>
</dbReference>
<dbReference type="CD-CODE" id="FB4E32DD">
    <property type="entry name" value="Presynaptic clusters and postsynaptic densities"/>
</dbReference>
<dbReference type="ChiTaRS" id="ERLIN2">
    <property type="organism name" value="human"/>
</dbReference>
<dbReference type="GeneWiki" id="ERLIN2"/>
<dbReference type="GenomeRNAi" id="11160"/>
<dbReference type="Pharos" id="O94905">
    <property type="development level" value="Tbio"/>
</dbReference>
<dbReference type="PRO" id="PR:O94905"/>
<dbReference type="Proteomes" id="UP000005640">
    <property type="component" value="Chromosome 8"/>
</dbReference>
<dbReference type="RNAct" id="O94905">
    <property type="molecule type" value="protein"/>
</dbReference>
<dbReference type="Bgee" id="ENSG00000147475">
    <property type="expression patterns" value="Expressed in choroid plexus epithelium and 199 other cell types or tissues"/>
</dbReference>
<dbReference type="ExpressionAtlas" id="O94905">
    <property type="expression patterns" value="baseline and differential"/>
</dbReference>
<dbReference type="GO" id="GO:0005829">
    <property type="term" value="C:cytosol"/>
    <property type="evidence" value="ECO:0000314"/>
    <property type="project" value="HPA"/>
</dbReference>
<dbReference type="GO" id="GO:0005783">
    <property type="term" value="C:endoplasmic reticulum"/>
    <property type="evidence" value="ECO:0000314"/>
    <property type="project" value="LIFEdb"/>
</dbReference>
<dbReference type="GO" id="GO:0005789">
    <property type="term" value="C:endoplasmic reticulum membrane"/>
    <property type="evidence" value="ECO:0000314"/>
    <property type="project" value="UniProtKB"/>
</dbReference>
<dbReference type="GO" id="GO:0045121">
    <property type="term" value="C:membrane raft"/>
    <property type="evidence" value="ECO:0000314"/>
    <property type="project" value="UniProtKB"/>
</dbReference>
<dbReference type="GO" id="GO:0005886">
    <property type="term" value="C:plasma membrane"/>
    <property type="evidence" value="ECO:0000314"/>
    <property type="project" value="HPA"/>
</dbReference>
<dbReference type="GO" id="GO:0032991">
    <property type="term" value="C:protein-containing complex"/>
    <property type="evidence" value="ECO:0000314"/>
    <property type="project" value="MGI"/>
</dbReference>
<dbReference type="GO" id="GO:0015485">
    <property type="term" value="F:cholesterol binding"/>
    <property type="evidence" value="ECO:0000318"/>
    <property type="project" value="GO_Central"/>
</dbReference>
<dbReference type="GO" id="GO:0031625">
    <property type="term" value="F:ubiquitin protein ligase binding"/>
    <property type="evidence" value="ECO:0000353"/>
    <property type="project" value="ParkinsonsUK-UCL"/>
</dbReference>
<dbReference type="GO" id="GO:0008203">
    <property type="term" value="P:cholesterol metabolic process"/>
    <property type="evidence" value="ECO:0007669"/>
    <property type="project" value="UniProtKB-KW"/>
</dbReference>
<dbReference type="GO" id="GO:0036503">
    <property type="term" value="P:ERAD pathway"/>
    <property type="evidence" value="ECO:0000314"/>
    <property type="project" value="UniProtKB"/>
</dbReference>
<dbReference type="GO" id="GO:0045541">
    <property type="term" value="P:negative regulation of cholesterol biosynthetic process"/>
    <property type="evidence" value="ECO:0000315"/>
    <property type="project" value="UniProtKB"/>
</dbReference>
<dbReference type="GO" id="GO:0045717">
    <property type="term" value="P:negative regulation of fatty acid biosynthetic process"/>
    <property type="evidence" value="ECO:0000315"/>
    <property type="project" value="UniProtKB"/>
</dbReference>
<dbReference type="GO" id="GO:0045540">
    <property type="term" value="P:regulation of cholesterol biosynthetic process"/>
    <property type="evidence" value="ECO:0000314"/>
    <property type="project" value="ComplexPortal"/>
</dbReference>
<dbReference type="GO" id="GO:0032933">
    <property type="term" value="P:SREBP signaling pathway"/>
    <property type="evidence" value="ECO:0000315"/>
    <property type="project" value="UniProtKB"/>
</dbReference>
<dbReference type="CDD" id="cd03406">
    <property type="entry name" value="SPFH_like_u3"/>
    <property type="match status" value="1"/>
</dbReference>
<dbReference type="FunFam" id="3.30.479.30:FF:000009">
    <property type="entry name" value="Erlin-2 isoform 1"/>
    <property type="match status" value="1"/>
</dbReference>
<dbReference type="Gene3D" id="3.30.479.30">
    <property type="entry name" value="Band 7 domain"/>
    <property type="match status" value="1"/>
</dbReference>
<dbReference type="InterPro" id="IPR001107">
    <property type="entry name" value="Band_7"/>
</dbReference>
<dbReference type="InterPro" id="IPR036013">
    <property type="entry name" value="Band_7/SPFH_dom_sf"/>
</dbReference>
<dbReference type="InterPro" id="IPR033294">
    <property type="entry name" value="Erlin1/2"/>
</dbReference>
<dbReference type="PANTHER" id="PTHR15351">
    <property type="entry name" value="ERLIN (ER LIPID RAFT ASSOCIATED PROTEIN) HOMOLOG"/>
    <property type="match status" value="1"/>
</dbReference>
<dbReference type="PANTHER" id="PTHR15351:SF4">
    <property type="entry name" value="ERLIN-2"/>
    <property type="match status" value="1"/>
</dbReference>
<dbReference type="Pfam" id="PF01145">
    <property type="entry name" value="Band_7"/>
    <property type="match status" value="1"/>
</dbReference>
<dbReference type="SMART" id="SM00244">
    <property type="entry name" value="PHB"/>
    <property type="match status" value="1"/>
</dbReference>
<protein>
    <recommendedName>
        <fullName>Erlin-2</fullName>
    </recommendedName>
    <alternativeName>
        <fullName>Endoplasmic reticulum lipid raft-associated protein 2</fullName>
    </alternativeName>
    <alternativeName>
        <fullName>Stomatin-prohibitin-flotillin-HflC/K domain-containing protein 2</fullName>
        <shortName>SPFH domain-containing protein 2</shortName>
    </alternativeName>
</protein>
<feature type="chain" id="PRO_0000002787" description="Erlin-2">
    <location>
        <begin position="1"/>
        <end position="339"/>
    </location>
</feature>
<feature type="topological domain" description="Cytoplasmic" evidence="3">
    <location>
        <begin position="1"/>
        <end position="3"/>
    </location>
</feature>
<feature type="transmembrane region" description="Helical" evidence="3">
    <location>
        <begin position="4"/>
        <end position="24"/>
    </location>
</feature>
<feature type="topological domain" description="Lumenal" evidence="3">
    <location>
        <begin position="25"/>
        <end position="339"/>
    </location>
</feature>
<feature type="region of interest" description="Interaction with ERLIN1" evidence="7">
    <location>
        <begin position="177"/>
        <end position="309"/>
    </location>
</feature>
<feature type="modified residue" description="N6-acetyllysine" evidence="1">
    <location>
        <position position="267"/>
    </location>
</feature>
<feature type="glycosylation site" description="N-linked (GlcNAc...) asparagine" evidence="6">
    <location>
        <position position="106"/>
    </location>
</feature>
<feature type="splice variant" id="VSP_013940" description="In isoform 3." evidence="18 19">
    <original>DQIDENLKLALQQDLTSMAPGLVIQAVRVTKPNIPEAIRRNYELMESEKTKLLIAAQKQKVVEKE</original>
    <variation>GKKVSPEHAVLKQGSWNPASLHCLKPGCLQGVMVTYGQEMLKNLVLRSWSQRSSWRMLIAMQQDP</variation>
    <location>
        <begin position="142"/>
        <end position="206"/>
    </location>
</feature>
<feature type="splice variant" id="VSP_008713" description="In isoform 2." evidence="17 19">
    <original>DQIDENLKLAL</original>
    <variation>GLENDFSQESS</variation>
    <location>
        <begin position="142"/>
        <end position="152"/>
    </location>
</feature>
<feature type="splice variant" id="VSP_008714" description="In isoform 2." evidence="17 19">
    <location>
        <begin position="153"/>
        <end position="339"/>
    </location>
</feature>
<feature type="splice variant" id="VSP_013941" description="In isoform 3." evidence="18 19">
    <location>
        <begin position="207"/>
        <end position="339"/>
    </location>
</feature>
<feature type="sequence variant" id="VAR_059140" description="In dbSNP:rs2032066.">
    <original>V</original>
    <variation>A</variation>
    <location>
        <position position="71"/>
    </location>
</feature>
<feature type="sequence variant" id="VAR_089040" description="In SPG18A; likely pathogenic." evidence="14">
    <original>S</original>
    <variation>T</variation>
    <location>
        <position position="129"/>
    </location>
</feature>
<feature type="sequence variant" id="VAR_089041" description="In SPG18A; uncertain significance; dbSNP:rs1554517327." evidence="16">
    <original>A</original>
    <variation>V</variation>
    <location>
        <position position="151"/>
    </location>
</feature>
<feature type="sequence variant" id="VAR_089042" description="In SPG18B; uncertain significance; dbSNP:rs1803174828." evidence="12">
    <original>R</original>
    <variation>C</variation>
    <location>
        <position position="180"/>
    </location>
</feature>
<feature type="sequence variant" id="VAR_089043" description="In SPG18B; uncertain significance; dbSNP:rs763958615." evidence="13">
    <original>D</original>
    <variation>V</variation>
    <location>
        <position position="300"/>
    </location>
</feature>
<feature type="mutagenesis site" description="Loss of glycosylation." evidence="6">
    <original>N</original>
    <variation>Q</variation>
    <location>
        <position position="106"/>
    </location>
</feature>
<feature type="sequence conflict" description="In Ref. 6; AAH05950." evidence="20" ref="6">
    <original>S</original>
    <variation>P</variation>
    <location>
        <position position="61"/>
    </location>
</feature>
<comment type="function">
    <text evidence="6 7 9 11">Component of the ERLIN1/ERLIN2 complex which mediates the endoplasmic reticulum-associated degradation (ERAD) of inositol 1,4,5-trisphosphate receptors (IP3Rs) such as ITPR1 (PubMed:17502376, PubMed:19240031). Promotes sterol-accelerated ERAD of HMGCR probably implicating an AMFR/gp78-containing ubiquitin ligase complex (PubMed:21343306). Involved in regulation of cellular cholesterol homeostasis by regulation the SREBP signaling pathway. May promote ER retention of the SCAP-SREBF complex (PubMed:24217618).</text>
</comment>
<comment type="subunit">
    <text evidence="2 7 9 10 11 15 21">Forms a heteromeric complex with ERLIN1. In complex with ERLIN1, interacts with RNF170 (PubMed:19240031, PubMed:21610068). Interacts with activated ITPR1, independently of the degree of ITPR1 polyubiquitination (By similarity). Interacts with SCAP, INSIG1, SREBF1 and SREBF2 under cholesterol sufficiency conditions; indicative for an association with the SCAP-SREBP-INSIG complex (PubMed:24217618). Probably part of an AMFR/gp78 and INSIG1-containing ubiquitin ligase complex involved in ERAD of HMGCR. Interacts with TMUB1; TMUB1 bridges the association with AMFR. Interacts with SYVN1 and RNF139 (PubMed:21343306). Interacts with TMEM259 (By similarity). Interacts with TMEM41B (PubMed:30352685).</text>
</comment>
<comment type="interaction">
    <interactant intactId="EBI-4400770">
        <id>O94905</id>
    </interactant>
    <interactant intactId="EBI-1046367">
        <id>Q9UKV5</id>
        <label>AMFR</label>
    </interactant>
    <organismsDiffer>false</organismsDiffer>
    <experiments>10</experiments>
</comment>
<comment type="interaction">
    <interactant intactId="EBI-4400770">
        <id>O94905</id>
    </interactant>
    <interactant intactId="EBI-359299">
        <id>O75477</id>
        <label>ERLIN1</label>
    </interactant>
    <organismsDiffer>false</organismsDiffer>
    <experiments>5</experiments>
</comment>
<comment type="interaction">
    <interactant intactId="EBI-4400770">
        <id>O94905</id>
    </interactant>
    <interactant intactId="EBI-947849">
        <id>Q86TM6</id>
        <label>SYVN1</label>
    </interactant>
    <organismsDiffer>false</organismsDiffer>
    <experiments>2</experiments>
</comment>
<comment type="interaction">
    <interactant intactId="EBI-4400770">
        <id>O94905</id>
    </interactant>
    <interactant intactId="EBI-11425701">
        <id>Q9BVT8</id>
        <label>TMUB1</label>
    </interactant>
    <organismsDiffer>false</organismsDiffer>
    <experiments>6</experiments>
</comment>
<comment type="interaction">
    <interactant intactId="EBI-4400770">
        <id>O94905</id>
    </interactant>
    <interactant intactId="EBI-11426687">
        <id>P00347</id>
        <label>HMGCR</label>
    </interactant>
    <organismsDiffer>true</organismsDiffer>
    <experiments>2</experiments>
</comment>
<comment type="subcellular location">
    <subcellularLocation>
        <location evidence="5 6 7">Endoplasmic reticulum membrane</location>
        <topology evidence="5 6 7">Single-pass type II membrane protein</topology>
    </subcellularLocation>
    <text>Associated with lipid raft-like domains of the endoplasmic reticulum membrane.</text>
</comment>
<comment type="alternative products">
    <event type="alternative splicing"/>
    <isoform>
        <id>O94905-1</id>
        <name>1</name>
        <sequence type="displayed"/>
    </isoform>
    <isoform>
        <id>O94905-2</id>
        <name>2</name>
        <sequence type="described" ref="VSP_008713 VSP_008714"/>
    </isoform>
    <isoform>
        <id>O94905-3</id>
        <name>3</name>
        <sequence type="described" ref="VSP_013940 VSP_013941"/>
    </isoform>
</comment>
<comment type="tissue specificity">
    <text evidence="4">Ubiquitous.</text>
</comment>
<comment type="PTM">
    <text evidence="1">Deubiquitinated by USP25; leading to stabilization.</text>
</comment>
<comment type="disease" evidence="8 12 13">
    <disease id="DI-03411">
        <name>Spastic paraplegia 18B, autosomal recessive</name>
        <acronym>SPG18B</acronym>
        <description>A form of spastic paraplegia, a neurodegenerative disorder characterized by a slow, gradual, progressive weakness and spasticity of the lower limbs. Rate of progression and the severity of symptoms are quite variable. Initial symptoms may include difficulty with balance, weakness and stiffness in the legs, muscle spasms, and dragging the toes when walking. In some forms of the disorder, bladder symptoms (such as incontinence) may appear, or the weakness and stiffness may spread to other parts of the body. SPG18B is a severe form with onset in early childhood. Most affected individuals have severe psychomotor retardation. Some may develop significant joint contractures.</description>
        <dbReference type="MIM" id="611225"/>
    </disease>
    <text>The disease is caused by variants affecting the gene represented in this entry.</text>
</comment>
<comment type="disease" evidence="14 16">
    <disease id="DI-06770">
        <name>Spastic paraplegia 18A, autosomal dominant</name>
        <acronym>SPG18A</acronym>
        <description>A form of spastic paraplegia, a neurodegenerative disorder characterized by a slow, gradual, progressive weakness and spasticity of the lower limbs. Rate of progression and the severity of symptoms are quite variable. Initial symptoms may include difficulty with balance, weakness and stiffness in the legs, muscle spasms, and dragging the toes when walking. In some forms of the disorder, bladder symptoms (such as incontinence) may appear, or the weakness and stiffness may spread to other parts of the body. SPG18A is a pure form. Age at onset of symptoms varies considerably from childhood to adulthood.</description>
        <dbReference type="MIM" id="620512"/>
    </disease>
    <text>The disease is caused by variants affecting the gene represented in this entry.</text>
</comment>
<comment type="similarity">
    <text evidence="20">Belongs to the band 7/mec-2 family.</text>
</comment>
<comment type="sequence caution" evidence="20">
    <conflict type="erroneous initiation">
        <sequence resource="EMBL-CDS" id="AAH50611"/>
    </conflict>
    <text>Extended N-terminus.</text>
</comment>
<sequence length="339" mass="37840">MAQLGAVVAVASSFFCASLFSAVHKIEEGHIGVYYRGGALLTSTSGPGFHLMLPFITSYKSVQTTLQTDEVKNVPCGTSGGVMIYFDRIEVVNFLVPNAVYDIVKNYTADYDKALIFNKIHHELNQFCSVHTLQEVYIELFDQIDENLKLALQQDLTSMAPGLVIQAVRVTKPNIPEAIRRNYELMESEKTKLLIAAQKQKVVEKEAETERKKALIEAEKVAQVAEITYGQKVMEKETEKKISEIEDAAFLAREKAKADAECYTAMKIAEANKLKLTPEYLQLMKYKAIASNSKIYFGKDIPNMFMDSAGSVSKQFEGLADKLSFGLEDEPLETATKEN</sequence>